<protein>
    <recommendedName>
        <fullName>Putative alpha-1,3-mannosyltransferase MNN1</fullName>
        <ecNumber>2.4.1.-</ecNumber>
    </recommendedName>
</protein>
<feature type="chain" id="PRO_0000424324" description="Putative alpha-1,3-mannosyltransferase MNN1">
    <location>
        <begin position="1"/>
        <end position="800"/>
    </location>
</feature>
<feature type="topological domain" description="Cytoplasmic" evidence="2">
    <location>
        <begin position="1"/>
        <end position="12"/>
    </location>
</feature>
<feature type="transmembrane region" description="Helical" evidence="2">
    <location>
        <begin position="13"/>
        <end position="30"/>
    </location>
</feature>
<feature type="topological domain" description="Lumenal" evidence="2">
    <location>
        <begin position="31"/>
        <end position="800"/>
    </location>
</feature>
<feature type="glycosylation site" description="N-linked (GlcNAc...) asparagine" evidence="2">
    <location>
        <position position="98"/>
    </location>
</feature>
<feature type="glycosylation site" description="N-linked (GlcNAc...) asparagine" evidence="2">
    <location>
        <position position="545"/>
    </location>
</feature>
<feature type="glycosylation site" description="N-linked (GlcNAc...) asparagine" evidence="2">
    <location>
        <position position="656"/>
    </location>
</feature>
<feature type="glycosylation site" description="N-linked (GlcNAc...) asparagine" evidence="2">
    <location>
        <position position="767"/>
    </location>
</feature>
<dbReference type="EC" id="2.4.1.-"/>
<dbReference type="EMBL" id="CP017627">
    <property type="protein sequence ID" value="AOW29688.1"/>
    <property type="molecule type" value="Genomic_DNA"/>
</dbReference>
<dbReference type="RefSeq" id="XP_720587.1">
    <property type="nucleotide sequence ID" value="XM_715494.1"/>
</dbReference>
<dbReference type="SMR" id="Q5AGA0"/>
<dbReference type="FunCoup" id="Q5AGA0">
    <property type="interactions" value="55"/>
</dbReference>
<dbReference type="STRING" id="237561.Q5AGA0"/>
<dbReference type="GlyCosmos" id="Q5AGA0">
    <property type="glycosylation" value="4 sites, No reported glycans"/>
</dbReference>
<dbReference type="EnsemblFungi" id="C5_02630C_A-T">
    <property type="protein sequence ID" value="C5_02630C_A-T-p1"/>
    <property type="gene ID" value="C5_02630C_A"/>
</dbReference>
<dbReference type="GeneID" id="3637784"/>
<dbReference type="KEGG" id="cal:CAALFM_C502630CA"/>
<dbReference type="CGD" id="CAL0000201916">
    <property type="gene designation" value="MNN1"/>
</dbReference>
<dbReference type="VEuPathDB" id="FungiDB:C5_02630C_A"/>
<dbReference type="eggNOG" id="ENOG502RZ48">
    <property type="taxonomic scope" value="Eukaryota"/>
</dbReference>
<dbReference type="HOGENOM" id="CLU_015387_0_0_1"/>
<dbReference type="InParanoid" id="Q5AGA0"/>
<dbReference type="OrthoDB" id="430354at2759"/>
<dbReference type="UniPathway" id="UPA00378"/>
<dbReference type="PHI-base" id="PHI:3690"/>
<dbReference type="PRO" id="PR:Q5AGA0"/>
<dbReference type="Proteomes" id="UP000000559">
    <property type="component" value="Chromosome 5"/>
</dbReference>
<dbReference type="GO" id="GO:0005794">
    <property type="term" value="C:Golgi apparatus"/>
    <property type="evidence" value="ECO:0000318"/>
    <property type="project" value="GO_Central"/>
</dbReference>
<dbReference type="GO" id="GO:0000139">
    <property type="term" value="C:Golgi membrane"/>
    <property type="evidence" value="ECO:0007669"/>
    <property type="project" value="UniProtKB-SubCell"/>
</dbReference>
<dbReference type="GO" id="GO:0000033">
    <property type="term" value="F:alpha-1,3-mannosyltransferase activity"/>
    <property type="evidence" value="ECO:0000318"/>
    <property type="project" value="GO_Central"/>
</dbReference>
<dbReference type="GO" id="GO:0046354">
    <property type="term" value="P:mannan biosynthetic process"/>
    <property type="evidence" value="ECO:0007669"/>
    <property type="project" value="UniProtKB-ARBA"/>
</dbReference>
<dbReference type="GO" id="GO:0035268">
    <property type="term" value="P:protein mannosylation"/>
    <property type="evidence" value="ECO:0007669"/>
    <property type="project" value="UniProtKB-ARBA"/>
</dbReference>
<dbReference type="GO" id="GO:0006493">
    <property type="term" value="P:protein O-linked glycosylation"/>
    <property type="evidence" value="ECO:0000318"/>
    <property type="project" value="GO_Central"/>
</dbReference>
<dbReference type="InterPro" id="IPR022751">
    <property type="entry name" value="Alpha_mannosyltransferase"/>
</dbReference>
<dbReference type="InterPro" id="IPR029044">
    <property type="entry name" value="Nucleotide-diphossugar_trans"/>
</dbReference>
<dbReference type="PANTHER" id="PTHR31392">
    <property type="entry name" value="ALPHA-1,3-MANNOSYLTRANSFERASE MNN1-RELATED"/>
    <property type="match status" value="1"/>
</dbReference>
<dbReference type="PANTHER" id="PTHR31392:SF1">
    <property type="entry name" value="ALPHA-1,3-MANNOSYLTRANSFERASE MNN1-RELATED"/>
    <property type="match status" value="1"/>
</dbReference>
<dbReference type="Pfam" id="PF11051">
    <property type="entry name" value="Mannosyl_trans3"/>
    <property type="match status" value="1"/>
</dbReference>
<dbReference type="SUPFAM" id="SSF53448">
    <property type="entry name" value="Nucleotide-diphospho-sugar transferases"/>
    <property type="match status" value="1"/>
</dbReference>
<comment type="function">
    <text evidence="1">Responsible for addition of the terminal mannose residues to the outer chain of core N-linked polysaccharides and to O-linked mannotriose. Implicated in late Golgi modifications (By similarity).</text>
</comment>
<comment type="pathway">
    <text>Protein modification; protein glycosylation.</text>
</comment>
<comment type="subcellular location">
    <subcellularLocation>
        <location evidence="1">Golgi apparatus membrane</location>
        <topology evidence="1">Single-pass type II membrane protein</topology>
    </subcellularLocation>
</comment>
<comment type="induction">
    <text evidence="3 4 5">Expression is negatively regulated by RIM101. Expression is also increased in absence of SUR7, as well as CHK1 and NIK1.</text>
</comment>
<comment type="similarity">
    <text evidence="6">Belongs to the MNN1/MNT family.</text>
</comment>
<reference key="1">
    <citation type="journal article" date="2004" name="Proc. Natl. Acad. Sci. U.S.A.">
        <title>The diploid genome sequence of Candida albicans.</title>
        <authorList>
            <person name="Jones T."/>
            <person name="Federspiel N.A."/>
            <person name="Chibana H."/>
            <person name="Dungan J."/>
            <person name="Kalman S."/>
            <person name="Magee B.B."/>
            <person name="Newport G."/>
            <person name="Thorstenson Y.R."/>
            <person name="Agabian N."/>
            <person name="Magee P.T."/>
            <person name="Davis R.W."/>
            <person name="Scherer S."/>
        </authorList>
    </citation>
    <scope>NUCLEOTIDE SEQUENCE [LARGE SCALE GENOMIC DNA]</scope>
    <source>
        <strain>SC5314 / ATCC MYA-2876</strain>
    </source>
</reference>
<reference key="2">
    <citation type="journal article" date="2007" name="Genome Biol.">
        <title>Assembly of the Candida albicans genome into sixteen supercontigs aligned on the eight chromosomes.</title>
        <authorList>
            <person name="van het Hoog M."/>
            <person name="Rast T.J."/>
            <person name="Martchenko M."/>
            <person name="Grindle S."/>
            <person name="Dignard D."/>
            <person name="Hogues H."/>
            <person name="Cuomo C."/>
            <person name="Berriman M."/>
            <person name="Scherer S."/>
            <person name="Magee B.B."/>
            <person name="Whiteway M."/>
            <person name="Chibana H."/>
            <person name="Nantel A."/>
            <person name="Magee P.T."/>
        </authorList>
    </citation>
    <scope>GENOME REANNOTATION</scope>
    <source>
        <strain>SC5314 / ATCC MYA-2876</strain>
    </source>
</reference>
<reference key="3">
    <citation type="journal article" date="2013" name="Genome Biol.">
        <title>Assembly of a phased diploid Candida albicans genome facilitates allele-specific measurements and provides a simple model for repeat and indel structure.</title>
        <authorList>
            <person name="Muzzey D."/>
            <person name="Schwartz K."/>
            <person name="Weissman J.S."/>
            <person name="Sherlock G."/>
        </authorList>
    </citation>
    <scope>NUCLEOTIDE SEQUENCE [LARGE SCALE GENOMIC DNA]</scope>
    <scope>GENOME REANNOTATION</scope>
    <source>
        <strain>SC5314 / ATCC MYA-2876</strain>
    </source>
</reference>
<reference key="4">
    <citation type="journal article" date="2003" name="Eukaryot. Cell">
        <title>Diverged binding specificity of Rim101p, the Candida albicans ortholog of PacC.</title>
        <authorList>
            <person name="Ramon A.M."/>
            <person name="Fonzi W.A."/>
        </authorList>
    </citation>
    <scope>INDUCTION</scope>
</reference>
<reference key="5">
    <citation type="journal article" date="2004" name="FEMS Yeast Res.">
        <title>The histidine kinases of Candida albicans: regulation of cell wall mannan biosynthesis.</title>
        <authorList>
            <person name="Kruppa M."/>
            <person name="Jabra-Rizk M.A."/>
            <person name="Meiller T.F."/>
            <person name="Calderone R."/>
        </authorList>
    </citation>
    <scope>INDUCTION</scope>
</reference>
<reference key="6">
    <citation type="journal article" date="2008" name="Mol. Biol. Cell">
        <title>The Sur7 protein regulates plasma membrane organization and prevents intracellular cell wall growth in Candida albicans.</title>
        <authorList>
            <person name="Alvarez F.J."/>
            <person name="Douglas L.M."/>
            <person name="Rosebrock A."/>
            <person name="Konopka J.B."/>
        </authorList>
    </citation>
    <scope>INDUCTION</scope>
</reference>
<reference key="7">
    <citation type="journal article" date="2013" name="BMC Res. Notes">
        <title>Role of the Candida albicans MNN1 gene family in cell wall structure and virulence.</title>
        <authorList>
            <person name="Bates S."/>
            <person name="Hall R.A."/>
            <person name="Cheetham J."/>
            <person name="Netea M.G."/>
            <person name="MacCallum D.M."/>
            <person name="Brown A.J."/>
            <person name="Odds F.C."/>
            <person name="Gow N.A."/>
        </authorList>
    </citation>
    <scope>IDENTIFICATION</scope>
</reference>
<keyword id="KW-0325">Glycoprotein</keyword>
<keyword id="KW-0328">Glycosyltransferase</keyword>
<keyword id="KW-0333">Golgi apparatus</keyword>
<keyword id="KW-0472">Membrane</keyword>
<keyword id="KW-1185">Reference proteome</keyword>
<keyword id="KW-0735">Signal-anchor</keyword>
<keyword id="KW-0808">Transferase</keyword>
<keyword id="KW-0812">Transmembrane</keyword>
<keyword id="KW-1133">Transmembrane helix</keyword>
<evidence type="ECO:0000250" key="1"/>
<evidence type="ECO:0000255" key="2"/>
<evidence type="ECO:0000269" key="3">
    <source>
    </source>
</evidence>
<evidence type="ECO:0000269" key="4">
    <source>
    </source>
</evidence>
<evidence type="ECO:0000269" key="5">
    <source>
    </source>
</evidence>
<evidence type="ECO:0000305" key="6"/>
<proteinExistence type="evidence at transcript level"/>
<accession>Q5AGA0</accession>
<accession>A0A1D8PNH6</accession>
<accession>Q5AGN6</accession>
<organism>
    <name type="scientific">Candida albicans (strain SC5314 / ATCC MYA-2876)</name>
    <name type="common">Yeast</name>
    <dbReference type="NCBI Taxonomy" id="237561"/>
    <lineage>
        <taxon>Eukaryota</taxon>
        <taxon>Fungi</taxon>
        <taxon>Dikarya</taxon>
        <taxon>Ascomycota</taxon>
        <taxon>Saccharomycotina</taxon>
        <taxon>Pichiomycetes</taxon>
        <taxon>Debaryomycetaceae</taxon>
        <taxon>Candida/Lodderomyces clade</taxon>
        <taxon>Candida</taxon>
    </lineage>
</organism>
<name>MNN1_CANAL</name>
<gene>
    <name type="primary">MNN1</name>
    <name type="ordered locus">CAALFM_C502630CA</name>
    <name type="ORF">CaO19.11755</name>
    <name type="ORF">CaO19.4279</name>
</gene>
<sequence>MIQKLIKNRQRSKWVLFTGASLWIFFILDFMNSNYYNTESHISSYSIYNVYDNLHEETESPPKSALSSSLLEPSTNQQTSDFKNHLLYKSLISSLFQNTTKQTKDLNSNIYDDIFSNHKLETVLGTLSFKERCDLYFKNVFAEDVNWHFNPDTRYDMHFDKNTKEFKDFIKVKELVIQEKFDKMKEKFKEEDYNRELSKLKKSMFTDFLNEKFEQEIVNRLSTFRIFNKCYITNDETPQINKINQFITNQQKLVQDIHRDESGNFYKSKIDKLKLTNKEALVDLMVTKSSTFEHRVYPWISKEYPVYERWTGKVYHEPPNYYEILNHDPMQKTPKKIQQSNNAAQPFLKQFKNKFNGRGIVLTIGNQHSDYAVSLIHLLRALDNKLPIQIVYYDDVNEESKRKIVTAAQEDFRSLPHSFEKVAHLFGDKYINSQGKGLQPQEVWFVNAYNSIHKNYRGKFSRFGNKLLASLFNSFSEFMLIDVDTVLMQPPEYFFQLKNYQTTGTYFFKDRSVLQRRTVEDGKFFERMGPSTVDQMMFDIPIMTNYTTTRELFRGLQHYMESGLVMINKDKHLNSILMITQINLIGPITGKVWGDKELFWLGFAINGDEEYYFDDNFAAAIGELTPPQDRARKDGTWHHSKEICSPHPGHVSGDDNHSLLWINSGFRFCHQADEVNFEKEAKKKTRLKHLHTADQFRTFYYNPLRITHAVVPPLDQDLQDRKNAMDEPTSGWLWESGYCKRYMWCAYSSVGGPQKRPDEKDDTVDNNETKDNTLDGILVEYNQDEIALFNYLGDIWVGTE</sequence>